<comment type="function">
    <text evidence="1">This peptide evokes slight hypotension (-2 mmHg), when injected alone into rats. It has a bradykinin-potentiating effect (75%), when 60 nmol of BPP-11f are coinjected with 0.5 ug of bradykinin into rats. It inhibits angiotensin converting enzyme (ACE) activity with a K(i)app of 82.10 uM.</text>
</comment>
<comment type="subcellular location">
    <subcellularLocation>
        <location>Secreted</location>
    </subcellularLocation>
</comment>
<comment type="tissue specificity">
    <text>Expressed by the venom gland.</text>
</comment>
<comment type="mass spectrometry" mass="1153.6" method="Electrospray" evidence="1"/>
<comment type="similarity">
    <text evidence="2">Belongs to the bradykinin-potentiating peptide family.</text>
</comment>
<protein>
    <recommendedName>
        <fullName>Bradykinin-potentiating peptide 11f</fullName>
        <shortName>BPP-11f</shortName>
    </recommendedName>
</protein>
<proteinExistence type="evidence at protein level"/>
<dbReference type="GO" id="GO:0005576">
    <property type="term" value="C:extracellular region"/>
    <property type="evidence" value="ECO:0007669"/>
    <property type="project" value="UniProtKB-SubCell"/>
</dbReference>
<dbReference type="GO" id="GO:0030414">
    <property type="term" value="F:peptidase inhibitor activity"/>
    <property type="evidence" value="ECO:0007669"/>
    <property type="project" value="UniProtKB-KW"/>
</dbReference>
<dbReference type="GO" id="GO:0090729">
    <property type="term" value="F:toxin activity"/>
    <property type="evidence" value="ECO:0007669"/>
    <property type="project" value="UniProtKB-KW"/>
</dbReference>
<dbReference type="GO" id="GO:0008217">
    <property type="term" value="P:regulation of blood pressure"/>
    <property type="evidence" value="ECO:0007669"/>
    <property type="project" value="UniProtKB-KW"/>
</dbReference>
<accession>P0DJK4</accession>
<keyword id="KW-0903">Direct protein sequencing</keyword>
<keyword id="KW-0382">Hypotensive agent</keyword>
<keyword id="KW-0481">Metalloenzyme inhibitor</keyword>
<keyword id="KW-0483">Metalloprotease inhibitor</keyword>
<keyword id="KW-0646">Protease inhibitor</keyword>
<keyword id="KW-0873">Pyrrolidone carboxylic acid</keyword>
<keyword id="KW-0964">Secreted</keyword>
<keyword id="KW-0800">Toxin</keyword>
<evidence type="ECO:0000269" key="1">
    <source>
    </source>
</evidence>
<evidence type="ECO:0000305" key="2"/>
<feature type="peptide" id="PRO_0000421905" description="Bradykinin-potentiating peptide 11f">
    <location>
        <begin position="1"/>
        <end position="11"/>
    </location>
</feature>
<feature type="modified residue" description="Pyrrolidone carboxylic acid" evidence="1">
    <location>
        <position position="1"/>
    </location>
</feature>
<feature type="unsure residue" description="K or Q">
    <location>
        <position position="8"/>
    </location>
</feature>
<name>BPPBF_BOTCO</name>
<organism>
    <name type="scientific">Bothrops cotiara</name>
    <name type="common">Cotiara</name>
    <name type="synonym">Rhinocerophis cotiara</name>
    <dbReference type="NCBI Taxonomy" id="8727"/>
    <lineage>
        <taxon>Eukaryota</taxon>
        <taxon>Metazoa</taxon>
        <taxon>Chordata</taxon>
        <taxon>Craniata</taxon>
        <taxon>Vertebrata</taxon>
        <taxon>Euteleostomi</taxon>
        <taxon>Lepidosauria</taxon>
        <taxon>Squamata</taxon>
        <taxon>Bifurcata</taxon>
        <taxon>Unidentata</taxon>
        <taxon>Episquamata</taxon>
        <taxon>Toxicofera</taxon>
        <taxon>Serpentes</taxon>
        <taxon>Colubroidea</taxon>
        <taxon>Viperidae</taxon>
        <taxon>Crotalinae</taxon>
        <taxon>Bothrops</taxon>
    </lineage>
</organism>
<reference key="1">
    <citation type="journal article" date="2012" name="Mol. Cell. Proteomics">
        <title>Peptidomics of three Bothrops snake venoms: insights into the molecular diversification of proteomes and peptidomes.</title>
        <authorList>
            <person name="Tashima A.K."/>
            <person name="Zelanis A."/>
            <person name="Kitano E.S."/>
            <person name="Ianzer D."/>
            <person name="Melo R.L."/>
            <person name="Rioli V."/>
            <person name="Sant'anna S.S."/>
            <person name="Schenberg A.C."/>
            <person name="Camargo A.C."/>
            <person name="Serrano S.M.T."/>
        </authorList>
    </citation>
    <scope>PROTEIN SEQUENCE</scope>
    <scope>SYNTHESIS</scope>
    <scope>FUNCTION</scope>
    <scope>PYROGLUTAMATE FORMATION AT GLN-1</scope>
    <scope>MASS SPECTROMETRY</scope>
    <source>
        <tissue>Venom</tissue>
    </source>
</reference>
<sequence length="11" mass="1171">QNAHPSPKVPP</sequence>